<dbReference type="EC" id="2.3.2.27" evidence="1"/>
<dbReference type="EMBL" id="AE017349">
    <property type="protein sequence ID" value="AAW45565.1"/>
    <property type="molecule type" value="Genomic_DNA"/>
</dbReference>
<dbReference type="RefSeq" id="XP_572872.1">
    <property type="nucleotide sequence ID" value="XM_572872.1"/>
</dbReference>
<dbReference type="SMR" id="P0CQ62"/>
<dbReference type="FunCoup" id="P0CQ62">
    <property type="interactions" value="228"/>
</dbReference>
<dbReference type="STRING" id="214684.P0CQ62"/>
<dbReference type="PaxDb" id="214684-P0CQ62"/>
<dbReference type="EnsemblFungi" id="AAW45565">
    <property type="protein sequence ID" value="AAW45565"/>
    <property type="gene ID" value="CNI02470"/>
</dbReference>
<dbReference type="GeneID" id="3259443"/>
<dbReference type="KEGG" id="cne:CNI02470"/>
<dbReference type="VEuPathDB" id="FungiDB:CNI02470"/>
<dbReference type="eggNOG" id="KOG0978">
    <property type="taxonomic scope" value="Eukaryota"/>
</dbReference>
<dbReference type="HOGENOM" id="CLU_019713_0_0_1"/>
<dbReference type="InParanoid" id="P0CQ62"/>
<dbReference type="OMA" id="YRQMQEY"/>
<dbReference type="OrthoDB" id="10266039at2759"/>
<dbReference type="UniPathway" id="UPA00143"/>
<dbReference type="Proteomes" id="UP000002149">
    <property type="component" value="Chromosome 9"/>
</dbReference>
<dbReference type="GO" id="GO:0033503">
    <property type="term" value="C:HULC complex"/>
    <property type="evidence" value="ECO:0000318"/>
    <property type="project" value="GO_Central"/>
</dbReference>
<dbReference type="GO" id="GO:0005634">
    <property type="term" value="C:nucleus"/>
    <property type="evidence" value="ECO:0000318"/>
    <property type="project" value="GO_Central"/>
</dbReference>
<dbReference type="GO" id="GO:0061630">
    <property type="term" value="F:ubiquitin protein ligase activity"/>
    <property type="evidence" value="ECO:0000318"/>
    <property type="project" value="GO_Central"/>
</dbReference>
<dbReference type="GO" id="GO:0008270">
    <property type="term" value="F:zinc ion binding"/>
    <property type="evidence" value="ECO:0007669"/>
    <property type="project" value="UniProtKB-KW"/>
</dbReference>
<dbReference type="GO" id="GO:0006325">
    <property type="term" value="P:chromatin organization"/>
    <property type="evidence" value="ECO:0007669"/>
    <property type="project" value="UniProtKB-KW"/>
</dbReference>
<dbReference type="GO" id="GO:0016567">
    <property type="term" value="P:protein ubiquitination"/>
    <property type="evidence" value="ECO:0007669"/>
    <property type="project" value="UniProtKB-UniPathway"/>
</dbReference>
<dbReference type="CDD" id="cd16499">
    <property type="entry name" value="RING-HC_Bre1-like"/>
    <property type="match status" value="1"/>
</dbReference>
<dbReference type="Gene3D" id="1.10.287.1490">
    <property type="match status" value="1"/>
</dbReference>
<dbReference type="Gene3D" id="3.30.40.10">
    <property type="entry name" value="Zinc/RING finger domain, C3HC4 (zinc finger)"/>
    <property type="match status" value="1"/>
</dbReference>
<dbReference type="InterPro" id="IPR013956">
    <property type="entry name" value="E3_ubiquit_lig_Bre1"/>
</dbReference>
<dbReference type="InterPro" id="IPR018957">
    <property type="entry name" value="Znf_C3HC4_RING-type"/>
</dbReference>
<dbReference type="InterPro" id="IPR001841">
    <property type="entry name" value="Znf_RING"/>
</dbReference>
<dbReference type="InterPro" id="IPR013083">
    <property type="entry name" value="Znf_RING/FYVE/PHD"/>
</dbReference>
<dbReference type="InterPro" id="IPR017907">
    <property type="entry name" value="Znf_RING_CS"/>
</dbReference>
<dbReference type="PANTHER" id="PTHR23163:SF0">
    <property type="entry name" value="E3 UBIQUITIN-PROTEIN LIGASE BRE1"/>
    <property type="match status" value="1"/>
</dbReference>
<dbReference type="PANTHER" id="PTHR23163">
    <property type="entry name" value="RING FINGER PROTEIN-RELATED"/>
    <property type="match status" value="1"/>
</dbReference>
<dbReference type="Pfam" id="PF08647">
    <property type="entry name" value="BRE1"/>
    <property type="match status" value="1"/>
</dbReference>
<dbReference type="Pfam" id="PF00097">
    <property type="entry name" value="zf-C3HC4"/>
    <property type="match status" value="1"/>
</dbReference>
<dbReference type="SUPFAM" id="SSF57850">
    <property type="entry name" value="RING/U-box"/>
    <property type="match status" value="1"/>
</dbReference>
<dbReference type="PROSITE" id="PS00518">
    <property type="entry name" value="ZF_RING_1"/>
    <property type="match status" value="1"/>
</dbReference>
<dbReference type="PROSITE" id="PS50089">
    <property type="entry name" value="ZF_RING_2"/>
    <property type="match status" value="1"/>
</dbReference>
<comment type="function">
    <text evidence="1">E3 ubiquitin-protein ligase that mediates monoubiquitination of histone H2B to form H2BK123ub1. H2BK123ub1 gives a specific tag for epigenetic transcriptional activation and is also a prerequisite for H3K4me and H3K79me formation.</text>
</comment>
<comment type="catalytic activity">
    <reaction evidence="1">
        <text>S-ubiquitinyl-[E2 ubiquitin-conjugating enzyme]-L-cysteine + [acceptor protein]-L-lysine = [E2 ubiquitin-conjugating enzyme]-L-cysteine + N(6)-ubiquitinyl-[acceptor protein]-L-lysine.</text>
        <dbReference type="EC" id="2.3.2.27"/>
    </reaction>
</comment>
<comment type="pathway">
    <text>Protein modification; protein ubiquitination.</text>
</comment>
<comment type="subcellular location">
    <subcellularLocation>
        <location evidence="1">Nucleus</location>
    </subcellularLocation>
</comment>
<comment type="similarity">
    <text evidence="5">Belongs to the BRE1 family.</text>
</comment>
<feature type="chain" id="PRO_0000055850" description="E3 ubiquitin-protein ligase BRE1">
    <location>
        <begin position="1"/>
        <end position="820"/>
    </location>
</feature>
<feature type="zinc finger region" description="RING-type" evidence="3">
    <location>
        <begin position="767"/>
        <end position="806"/>
    </location>
</feature>
<feature type="region of interest" description="Disordered" evidence="4">
    <location>
        <begin position="1"/>
        <end position="38"/>
    </location>
</feature>
<feature type="region of interest" description="Disordered" evidence="4">
    <location>
        <begin position="213"/>
        <end position="254"/>
    </location>
</feature>
<feature type="coiled-coil region" evidence="2">
    <location>
        <begin position="68"/>
        <end position="92"/>
    </location>
</feature>
<feature type="coiled-coil region" evidence="2">
    <location>
        <begin position="164"/>
        <end position="226"/>
    </location>
</feature>
<feature type="coiled-coil region" evidence="2">
    <location>
        <begin position="287"/>
        <end position="738"/>
    </location>
</feature>
<feature type="compositionally biased region" description="Basic and acidic residues" evidence="4">
    <location>
        <begin position="1"/>
        <end position="12"/>
    </location>
</feature>
<feature type="compositionally biased region" description="Basic and acidic residues" evidence="4">
    <location>
        <begin position="213"/>
        <end position="233"/>
    </location>
</feature>
<feature type="compositionally biased region" description="Polar residues" evidence="4">
    <location>
        <begin position="235"/>
        <end position="252"/>
    </location>
</feature>
<name>BRE1_CRYNJ</name>
<evidence type="ECO:0000250" key="1">
    <source>
        <dbReference type="UniProtKB" id="Q07457"/>
    </source>
</evidence>
<evidence type="ECO:0000255" key="2"/>
<evidence type="ECO:0000255" key="3">
    <source>
        <dbReference type="PROSITE-ProRule" id="PRU00175"/>
    </source>
</evidence>
<evidence type="ECO:0000256" key="4">
    <source>
        <dbReference type="SAM" id="MobiDB-lite"/>
    </source>
</evidence>
<evidence type="ECO:0000305" key="5"/>
<accession>P0CQ62</accession>
<accession>Q55N50</accession>
<accession>Q5KBI0</accession>
<keyword id="KW-0156">Chromatin regulator</keyword>
<keyword id="KW-0175">Coiled coil</keyword>
<keyword id="KW-0479">Metal-binding</keyword>
<keyword id="KW-0539">Nucleus</keyword>
<keyword id="KW-1185">Reference proteome</keyword>
<keyword id="KW-0808">Transferase</keyword>
<keyword id="KW-0833">Ubl conjugation pathway</keyword>
<keyword id="KW-0862">Zinc</keyword>
<keyword id="KW-0863">Zinc-finger</keyword>
<protein>
    <recommendedName>
        <fullName>E3 ubiquitin-protein ligase BRE1</fullName>
        <ecNumber evidence="1">2.3.2.27</ecNumber>
    </recommendedName>
    <alternativeName>
        <fullName evidence="5">RING-type E3 ubiquitin transferase BRE1</fullName>
    </alternativeName>
</protein>
<proteinExistence type="inferred from homology"/>
<gene>
    <name type="primary">BRE1</name>
    <name type="ordered locus">CNI02470</name>
</gene>
<reference key="1">
    <citation type="journal article" date="2005" name="Science">
        <title>The genome of the basidiomycetous yeast and human pathogen Cryptococcus neoformans.</title>
        <authorList>
            <person name="Loftus B.J."/>
            <person name="Fung E."/>
            <person name="Roncaglia P."/>
            <person name="Rowley D."/>
            <person name="Amedeo P."/>
            <person name="Bruno D."/>
            <person name="Vamathevan J."/>
            <person name="Miranda M."/>
            <person name="Anderson I.J."/>
            <person name="Fraser J.A."/>
            <person name="Allen J.E."/>
            <person name="Bosdet I.E."/>
            <person name="Brent M.R."/>
            <person name="Chiu R."/>
            <person name="Doering T.L."/>
            <person name="Donlin M.J."/>
            <person name="D'Souza C.A."/>
            <person name="Fox D.S."/>
            <person name="Grinberg V."/>
            <person name="Fu J."/>
            <person name="Fukushima M."/>
            <person name="Haas B.J."/>
            <person name="Huang J.C."/>
            <person name="Janbon G."/>
            <person name="Jones S.J.M."/>
            <person name="Koo H.L."/>
            <person name="Krzywinski M.I."/>
            <person name="Kwon-Chung K.J."/>
            <person name="Lengeler K.B."/>
            <person name="Maiti R."/>
            <person name="Marra M.A."/>
            <person name="Marra R.E."/>
            <person name="Mathewson C.A."/>
            <person name="Mitchell T.G."/>
            <person name="Pertea M."/>
            <person name="Riggs F.R."/>
            <person name="Salzberg S.L."/>
            <person name="Schein J.E."/>
            <person name="Shvartsbeyn A."/>
            <person name="Shin H."/>
            <person name="Shumway M."/>
            <person name="Specht C.A."/>
            <person name="Suh B.B."/>
            <person name="Tenney A."/>
            <person name="Utterback T.R."/>
            <person name="Wickes B.L."/>
            <person name="Wortman J.R."/>
            <person name="Wye N.H."/>
            <person name="Kronstad J.W."/>
            <person name="Lodge J.K."/>
            <person name="Heitman J."/>
            <person name="Davis R.W."/>
            <person name="Fraser C.M."/>
            <person name="Hyman R.W."/>
        </authorList>
    </citation>
    <scope>NUCLEOTIDE SEQUENCE [LARGE SCALE GENOMIC DNA]</scope>
    <source>
        <strain>JEC21 / ATCC MYA-565</strain>
    </source>
</reference>
<organism>
    <name type="scientific">Cryptococcus neoformans var. neoformans serotype D (strain JEC21 / ATCC MYA-565)</name>
    <name type="common">Filobasidiella neoformans</name>
    <dbReference type="NCBI Taxonomy" id="214684"/>
    <lineage>
        <taxon>Eukaryota</taxon>
        <taxon>Fungi</taxon>
        <taxon>Dikarya</taxon>
        <taxon>Basidiomycota</taxon>
        <taxon>Agaricomycotina</taxon>
        <taxon>Tremellomycetes</taxon>
        <taxon>Tremellales</taxon>
        <taxon>Cryptococcaceae</taxon>
        <taxon>Cryptococcus</taxon>
        <taxon>Cryptococcus neoformans species complex</taxon>
    </lineage>
</organism>
<sequence length="820" mass="92837">MNADLKRVRENTLDDSPSPSAKRRLNSNASSPIQPSDDEGMAEWMKIVEVKRKEAIYRQMLEYRRISEHETKRANDLEAQRRVLEASFHAVELCWTQIVAAVRDLAGAENLQLKEEEVLEPLLDPSTPVPELEKALRSRLPTTRQLVTRFVDLVAHNATRPASEADLQARCLKLEAEASALRSNSKLLESEISALKGSRDEAQRDLQRIRKALDRERMEHGKAQEEWKEERTRGGQATPNLRANGSGHSTPNGKVEADKKFYSGAGPSMAGVLQDTSELEQLAASRLKQLEQLRFEQTQLQQEVDRLKILANHPSEAALRESPFFQVYLHQLSTSINRAESLQTRFTATESKLDQLRDSNGEFREAVLAEARGQTETLRAQMAKKDSDIARLRGQRDELNSEIMERRAKEVEKCKYTEQIENLANSRQERISFLTSEVRRLKGKLAAAHSSDGYLSFLKESGIDGDYVKDLEAKVVTSQDQINALTSQLERVSSDTAAAKSETEVRTELESAKRLLARYERILGPNPEAAEDVRYLSQQLEKKEKERASLEMKLEEAEAATNALYSEVEGLSKLWEALDQTVKSKVLELRDGEQKITRLATEKAKADNKYFAAMRAKEAVDMEAKAAQRSVEKQLRLLERAQEVETSLRSQITANEKGLTALKNNALDLQNQLATVVAEKTQLELRLQQSQNALVEAQQIMHQRVAEAIAEKEARAKLQDEADGQMKIIKKLKERQDAVAAASQTGMSDHEWAITQERDKLLKLLKCSCCEQNFKQQVIVKCMHTFCKQCLEQRIASRQRKCPACGLAFAKEDIQTLYWQ</sequence>